<dbReference type="EMBL" id="AE016825">
    <property type="protein sequence ID" value="AAQ59290.1"/>
    <property type="molecule type" value="Genomic_DNA"/>
</dbReference>
<dbReference type="RefSeq" id="WP_011135166.1">
    <property type="nucleotide sequence ID" value="NC_005085.1"/>
</dbReference>
<dbReference type="SMR" id="Q7NXL2"/>
<dbReference type="STRING" id="243365.CV_1614"/>
<dbReference type="GeneID" id="66367298"/>
<dbReference type="KEGG" id="cvi:CV_1614"/>
<dbReference type="eggNOG" id="COG2834">
    <property type="taxonomic scope" value="Bacteria"/>
</dbReference>
<dbReference type="HOGENOM" id="CLU_087560_0_1_4"/>
<dbReference type="OrthoDB" id="9787361at2"/>
<dbReference type="Proteomes" id="UP000001424">
    <property type="component" value="Chromosome"/>
</dbReference>
<dbReference type="GO" id="GO:0042597">
    <property type="term" value="C:periplasmic space"/>
    <property type="evidence" value="ECO:0007669"/>
    <property type="project" value="UniProtKB-SubCell"/>
</dbReference>
<dbReference type="GO" id="GO:0044874">
    <property type="term" value="P:lipoprotein localization to outer membrane"/>
    <property type="evidence" value="ECO:0007669"/>
    <property type="project" value="UniProtKB-UniRule"/>
</dbReference>
<dbReference type="GO" id="GO:0042953">
    <property type="term" value="P:lipoprotein transport"/>
    <property type="evidence" value="ECO:0007669"/>
    <property type="project" value="InterPro"/>
</dbReference>
<dbReference type="CDD" id="cd16325">
    <property type="entry name" value="LolA"/>
    <property type="match status" value="1"/>
</dbReference>
<dbReference type="Gene3D" id="2.50.20.10">
    <property type="entry name" value="Lipoprotein localisation LolA/LolB/LppX"/>
    <property type="match status" value="1"/>
</dbReference>
<dbReference type="HAMAP" id="MF_00240">
    <property type="entry name" value="LolA"/>
    <property type="match status" value="1"/>
</dbReference>
<dbReference type="InterPro" id="IPR029046">
    <property type="entry name" value="LolA/LolB/LppX"/>
</dbReference>
<dbReference type="InterPro" id="IPR004564">
    <property type="entry name" value="OM_lipoprot_carrier_LolA-like"/>
</dbReference>
<dbReference type="InterPro" id="IPR018323">
    <property type="entry name" value="OM_lipoprot_carrier_LolA_Pbac"/>
</dbReference>
<dbReference type="NCBIfam" id="TIGR00547">
    <property type="entry name" value="lolA"/>
    <property type="match status" value="1"/>
</dbReference>
<dbReference type="PANTHER" id="PTHR35869">
    <property type="entry name" value="OUTER-MEMBRANE LIPOPROTEIN CARRIER PROTEIN"/>
    <property type="match status" value="1"/>
</dbReference>
<dbReference type="PANTHER" id="PTHR35869:SF1">
    <property type="entry name" value="OUTER-MEMBRANE LIPOPROTEIN CARRIER PROTEIN"/>
    <property type="match status" value="1"/>
</dbReference>
<dbReference type="Pfam" id="PF03548">
    <property type="entry name" value="LolA"/>
    <property type="match status" value="1"/>
</dbReference>
<dbReference type="SUPFAM" id="SSF89392">
    <property type="entry name" value="Prokaryotic lipoproteins and lipoprotein localization factors"/>
    <property type="match status" value="1"/>
</dbReference>
<reference key="1">
    <citation type="journal article" date="2003" name="Proc. Natl. Acad. Sci. U.S.A.">
        <title>The complete genome sequence of Chromobacterium violaceum reveals remarkable and exploitable bacterial adaptability.</title>
        <authorList>
            <person name="Vasconcelos A.T.R."/>
            <person name="de Almeida D.F."/>
            <person name="Hungria M."/>
            <person name="Guimaraes C.T."/>
            <person name="Antonio R.V."/>
            <person name="Almeida F.C."/>
            <person name="de Almeida L.G.P."/>
            <person name="de Almeida R."/>
            <person name="Alves-Gomes J.A."/>
            <person name="Andrade E.M."/>
            <person name="Araripe J."/>
            <person name="de Araujo M.F.F."/>
            <person name="Astolfi-Filho S."/>
            <person name="Azevedo V."/>
            <person name="Baptista A.J."/>
            <person name="Bataus L.A.M."/>
            <person name="Batista J.S."/>
            <person name="Belo A."/>
            <person name="van den Berg C."/>
            <person name="Bogo M."/>
            <person name="Bonatto S."/>
            <person name="Bordignon J."/>
            <person name="Brigido M.M."/>
            <person name="Brito C.A."/>
            <person name="Brocchi M."/>
            <person name="Burity H.A."/>
            <person name="Camargo A.A."/>
            <person name="Cardoso D.D.P."/>
            <person name="Carneiro N.P."/>
            <person name="Carraro D.M."/>
            <person name="Carvalho C.M.B."/>
            <person name="Cascardo J.C.M."/>
            <person name="Cavada B.S."/>
            <person name="Chueire L.M.O."/>
            <person name="Creczynski-Pasa T.B."/>
            <person name="Cunha-Junior N.C."/>
            <person name="Fagundes N."/>
            <person name="Falcao C.L."/>
            <person name="Fantinatti F."/>
            <person name="Farias I.P."/>
            <person name="Felipe M.S.S."/>
            <person name="Ferrari L.P."/>
            <person name="Ferro J.A."/>
            <person name="Ferro M.I.T."/>
            <person name="Franco G.R."/>
            <person name="Freitas N.S.A."/>
            <person name="Furlan L.R."/>
            <person name="Gazzinelli R.T."/>
            <person name="Gomes E.A."/>
            <person name="Goncalves P.R."/>
            <person name="Grangeiro T.B."/>
            <person name="Grattapaglia D."/>
            <person name="Grisard E.C."/>
            <person name="Hanna E.S."/>
            <person name="Jardim S.N."/>
            <person name="Laurino J."/>
            <person name="Leoi L.C.T."/>
            <person name="Lima L.F.A."/>
            <person name="Loureiro M.F."/>
            <person name="Lyra M.C.C.P."/>
            <person name="Madeira H.M.F."/>
            <person name="Manfio G.P."/>
            <person name="Maranhao A.Q."/>
            <person name="Martins W.S."/>
            <person name="di Mauro S.M.Z."/>
            <person name="de Medeiros S.R.B."/>
            <person name="Meissner R.V."/>
            <person name="Moreira M.A.M."/>
            <person name="Nascimento F.F."/>
            <person name="Nicolas M.F."/>
            <person name="Oliveira J.G."/>
            <person name="Oliveira S.C."/>
            <person name="Paixao R.F.C."/>
            <person name="Parente J.A."/>
            <person name="Pedrosa F.O."/>
            <person name="Pena S.D.J."/>
            <person name="Pereira J.O."/>
            <person name="Pereira M."/>
            <person name="Pinto L.S.R.C."/>
            <person name="Pinto L.S."/>
            <person name="Porto J.I.R."/>
            <person name="Potrich D.P."/>
            <person name="Ramalho-Neto C.E."/>
            <person name="Reis A.M.M."/>
            <person name="Rigo L.U."/>
            <person name="Rondinelli E."/>
            <person name="Santos E.B.P."/>
            <person name="Santos F.R."/>
            <person name="Schneider M.P.C."/>
            <person name="Seuanez H.N."/>
            <person name="Silva A.M.R."/>
            <person name="da Silva A.L.C."/>
            <person name="Silva D.W."/>
            <person name="Silva R."/>
            <person name="Simoes I.C."/>
            <person name="Simon D."/>
            <person name="Soares C.M.A."/>
            <person name="Soares R.B.A."/>
            <person name="Souza E.M."/>
            <person name="Souza K.R.L."/>
            <person name="Souza R.C."/>
            <person name="Steffens M.B.R."/>
            <person name="Steindel M."/>
            <person name="Teixeira S.R."/>
            <person name="Urmenyi T."/>
            <person name="Vettore A."/>
            <person name="Wassem R."/>
            <person name="Zaha A."/>
            <person name="Simpson A.J.G."/>
        </authorList>
    </citation>
    <scope>NUCLEOTIDE SEQUENCE [LARGE SCALE GENOMIC DNA]</scope>
    <source>
        <strain>ATCC 12472 / DSM 30191 / JCM 1249 / CCUG 213 / NBRC 12614 / NCIMB 9131 / NCTC 9757 / MK</strain>
    </source>
</reference>
<keyword id="KW-0143">Chaperone</keyword>
<keyword id="KW-0574">Periplasm</keyword>
<keyword id="KW-0653">Protein transport</keyword>
<keyword id="KW-1185">Reference proteome</keyword>
<keyword id="KW-0732">Signal</keyword>
<keyword id="KW-0813">Transport</keyword>
<sequence>MKPLFPMLTAAAIAAGLAAPAQASAVAQLKAFVSGSKTLSADFNQTVTNKGKREEASGRLEIARPGKFRWEYTKPYAQLIVGDGKTLWIYDQDLAQVTRKAQGAALGSSPAALLAGNNEIERSYKLNEAGKQGDLEWLAASPKKQDNTFSAIRMGFKNNVLVEMQLTDSFGNDTRIVFSQQRQNAALPPARFAFAPPKGVDVVSGD</sequence>
<organism>
    <name type="scientific">Chromobacterium violaceum (strain ATCC 12472 / DSM 30191 / JCM 1249 / CCUG 213 / NBRC 12614 / NCIMB 9131 / NCTC 9757 / MK)</name>
    <dbReference type="NCBI Taxonomy" id="243365"/>
    <lineage>
        <taxon>Bacteria</taxon>
        <taxon>Pseudomonadati</taxon>
        <taxon>Pseudomonadota</taxon>
        <taxon>Betaproteobacteria</taxon>
        <taxon>Neisseriales</taxon>
        <taxon>Chromobacteriaceae</taxon>
        <taxon>Chromobacterium</taxon>
    </lineage>
</organism>
<evidence type="ECO:0000255" key="1">
    <source>
        <dbReference type="HAMAP-Rule" id="MF_00240"/>
    </source>
</evidence>
<proteinExistence type="inferred from homology"/>
<name>LOLA_CHRVO</name>
<comment type="function">
    <text evidence="1">Participates in the translocation of lipoproteins from the inner membrane to the outer membrane. Only forms a complex with a lipoprotein if the residue after the N-terminal Cys is not an aspartate (The Asp acts as a targeting signal to indicate that the lipoprotein should stay in the inner membrane).</text>
</comment>
<comment type="subunit">
    <text evidence="1">Monomer.</text>
</comment>
<comment type="subcellular location">
    <subcellularLocation>
        <location evidence="1">Periplasm</location>
    </subcellularLocation>
</comment>
<comment type="similarity">
    <text evidence="1">Belongs to the LolA family.</text>
</comment>
<feature type="signal peptide" evidence="1">
    <location>
        <begin position="1"/>
        <end position="23"/>
    </location>
</feature>
<feature type="chain" id="PRO_0000018254" description="Outer-membrane lipoprotein carrier protein">
    <location>
        <begin position="24"/>
        <end position="206"/>
    </location>
</feature>
<accession>Q7NXL2</accession>
<protein>
    <recommendedName>
        <fullName evidence="1">Outer-membrane lipoprotein carrier protein</fullName>
    </recommendedName>
</protein>
<gene>
    <name evidence="1" type="primary">lolA</name>
    <name type="ordered locus">CV_1614</name>
</gene>